<accession>Q7WCU6</accession>
<evidence type="ECO:0000255" key="1">
    <source>
        <dbReference type="HAMAP-Rule" id="MF_01350"/>
    </source>
</evidence>
<keyword id="KW-0997">Cell inner membrane</keyword>
<keyword id="KW-1003">Cell membrane</keyword>
<keyword id="KW-0472">Membrane</keyword>
<keyword id="KW-0520">NAD</keyword>
<keyword id="KW-0874">Quinone</keyword>
<keyword id="KW-1278">Translocase</keyword>
<keyword id="KW-0812">Transmembrane</keyword>
<keyword id="KW-1133">Transmembrane helix</keyword>
<keyword id="KW-0830">Ubiquinone</keyword>
<sequence>MEWLNVLESHGQALLGPVAWMVVWSLVKIVVIAVPIILCVAYLTYWERKMIGAMHVRLGPTRVGFKGLLQPFADVFKLLTKEVVVPSAANKVLFVVAPVVTLMPALAAWAVVPFGPEVVLANVNAGLLYIMAITSIGVYGVIVAGWASNSKYAFLGALRASAQMVSYELAIGFVLVSVLLVSGSLNMSEIVLGQGRGWFAERGLTFLSWNWLPLLPLFIIYVISAVAETNRHPFDVVEGESEIVAGHMVEYSGMAFALFFLGEYANMILLSCMAAIMFLGGWMSPIDIAPLNWIPGWIWLGIKTFCVVSMFVWFRASFPRYRYDQIMRLGWKIFIPLTGVWLVVLAIWMQTPWNIWR</sequence>
<reference key="1">
    <citation type="journal article" date="2003" name="Nat. Genet.">
        <title>Comparative analysis of the genome sequences of Bordetella pertussis, Bordetella parapertussis and Bordetella bronchiseptica.</title>
        <authorList>
            <person name="Parkhill J."/>
            <person name="Sebaihia M."/>
            <person name="Preston A."/>
            <person name="Murphy L.D."/>
            <person name="Thomson N.R."/>
            <person name="Harris D.E."/>
            <person name="Holden M.T.G."/>
            <person name="Churcher C.M."/>
            <person name="Bentley S.D."/>
            <person name="Mungall K.L."/>
            <person name="Cerdeno-Tarraga A.-M."/>
            <person name="Temple L."/>
            <person name="James K.D."/>
            <person name="Harris B."/>
            <person name="Quail M.A."/>
            <person name="Achtman M."/>
            <person name="Atkin R."/>
            <person name="Baker S."/>
            <person name="Basham D."/>
            <person name="Bason N."/>
            <person name="Cherevach I."/>
            <person name="Chillingworth T."/>
            <person name="Collins M."/>
            <person name="Cronin A."/>
            <person name="Davis P."/>
            <person name="Doggett J."/>
            <person name="Feltwell T."/>
            <person name="Goble A."/>
            <person name="Hamlin N."/>
            <person name="Hauser H."/>
            <person name="Holroyd S."/>
            <person name="Jagels K."/>
            <person name="Leather S."/>
            <person name="Moule S."/>
            <person name="Norberczak H."/>
            <person name="O'Neil S."/>
            <person name="Ormond D."/>
            <person name="Price C."/>
            <person name="Rabbinowitsch E."/>
            <person name="Rutter S."/>
            <person name="Sanders M."/>
            <person name="Saunders D."/>
            <person name="Seeger K."/>
            <person name="Sharp S."/>
            <person name="Simmonds M."/>
            <person name="Skelton J."/>
            <person name="Squares R."/>
            <person name="Squares S."/>
            <person name="Stevens K."/>
            <person name="Unwin L."/>
            <person name="Whitehead S."/>
            <person name="Barrell B.G."/>
            <person name="Maskell D.J."/>
        </authorList>
    </citation>
    <scope>NUCLEOTIDE SEQUENCE [LARGE SCALE GENOMIC DNA]</scope>
    <source>
        <strain>ATCC BAA-588 / NCTC 13252 / RB50</strain>
    </source>
</reference>
<dbReference type="EC" id="7.1.1.-" evidence="1"/>
<dbReference type="EMBL" id="BX640448">
    <property type="protein sequence ID" value="CAE35808.1"/>
    <property type="molecule type" value="Genomic_DNA"/>
</dbReference>
<dbReference type="RefSeq" id="WP_003813926.1">
    <property type="nucleotide sequence ID" value="NC_002927.3"/>
</dbReference>
<dbReference type="SMR" id="Q7WCU6"/>
<dbReference type="GeneID" id="93205167"/>
<dbReference type="KEGG" id="bbr:BB3834"/>
<dbReference type="eggNOG" id="COG1005">
    <property type="taxonomic scope" value="Bacteria"/>
</dbReference>
<dbReference type="HOGENOM" id="CLU_015134_0_1_4"/>
<dbReference type="Proteomes" id="UP000001027">
    <property type="component" value="Chromosome"/>
</dbReference>
<dbReference type="GO" id="GO:0005886">
    <property type="term" value="C:plasma membrane"/>
    <property type="evidence" value="ECO:0007669"/>
    <property type="project" value="UniProtKB-SubCell"/>
</dbReference>
<dbReference type="GO" id="GO:0003954">
    <property type="term" value="F:NADH dehydrogenase activity"/>
    <property type="evidence" value="ECO:0007669"/>
    <property type="project" value="TreeGrafter"/>
</dbReference>
<dbReference type="GO" id="GO:0016655">
    <property type="term" value="F:oxidoreductase activity, acting on NAD(P)H, quinone or similar compound as acceptor"/>
    <property type="evidence" value="ECO:0007669"/>
    <property type="project" value="UniProtKB-UniRule"/>
</dbReference>
<dbReference type="GO" id="GO:0048038">
    <property type="term" value="F:quinone binding"/>
    <property type="evidence" value="ECO:0007669"/>
    <property type="project" value="UniProtKB-KW"/>
</dbReference>
<dbReference type="GO" id="GO:0009060">
    <property type="term" value="P:aerobic respiration"/>
    <property type="evidence" value="ECO:0007669"/>
    <property type="project" value="TreeGrafter"/>
</dbReference>
<dbReference type="HAMAP" id="MF_01350">
    <property type="entry name" value="NDH1_NuoH"/>
    <property type="match status" value="1"/>
</dbReference>
<dbReference type="InterPro" id="IPR001694">
    <property type="entry name" value="NADH_UbQ_OxRdtase_su1/FPO"/>
</dbReference>
<dbReference type="InterPro" id="IPR018086">
    <property type="entry name" value="NADH_UbQ_OxRdtase_su1_CS"/>
</dbReference>
<dbReference type="NCBIfam" id="NF004741">
    <property type="entry name" value="PRK06076.1-2"/>
    <property type="match status" value="1"/>
</dbReference>
<dbReference type="NCBIfam" id="NF004742">
    <property type="entry name" value="PRK06076.1-3"/>
    <property type="match status" value="1"/>
</dbReference>
<dbReference type="PANTHER" id="PTHR11432">
    <property type="entry name" value="NADH DEHYDROGENASE SUBUNIT 1"/>
    <property type="match status" value="1"/>
</dbReference>
<dbReference type="PANTHER" id="PTHR11432:SF3">
    <property type="entry name" value="NADH-UBIQUINONE OXIDOREDUCTASE CHAIN 1"/>
    <property type="match status" value="1"/>
</dbReference>
<dbReference type="Pfam" id="PF00146">
    <property type="entry name" value="NADHdh"/>
    <property type="match status" value="1"/>
</dbReference>
<dbReference type="PROSITE" id="PS00668">
    <property type="entry name" value="COMPLEX1_ND1_2"/>
    <property type="match status" value="1"/>
</dbReference>
<gene>
    <name evidence="1" type="primary">nuoH</name>
    <name type="ordered locus">BB3834</name>
</gene>
<proteinExistence type="inferred from homology"/>
<comment type="function">
    <text evidence="1">NDH-1 shuttles electrons from NADH, via FMN and iron-sulfur (Fe-S) centers, to quinones in the respiratory chain. The immediate electron acceptor for the enzyme in this species is believed to be ubiquinone. Couples the redox reaction to proton translocation (for every two electrons transferred, four hydrogen ions are translocated across the cytoplasmic membrane), and thus conserves the redox energy in a proton gradient. This subunit may bind ubiquinone.</text>
</comment>
<comment type="catalytic activity">
    <reaction evidence="1">
        <text>a quinone + NADH + 5 H(+)(in) = a quinol + NAD(+) + 4 H(+)(out)</text>
        <dbReference type="Rhea" id="RHEA:57888"/>
        <dbReference type="ChEBI" id="CHEBI:15378"/>
        <dbReference type="ChEBI" id="CHEBI:24646"/>
        <dbReference type="ChEBI" id="CHEBI:57540"/>
        <dbReference type="ChEBI" id="CHEBI:57945"/>
        <dbReference type="ChEBI" id="CHEBI:132124"/>
    </reaction>
</comment>
<comment type="subunit">
    <text evidence="1">NDH-1 is composed of 14 different subunits. Subunits NuoA, H, J, K, L, M, N constitute the membrane sector of the complex.</text>
</comment>
<comment type="subcellular location">
    <subcellularLocation>
        <location evidence="1">Cell inner membrane</location>
        <topology evidence="1">Multi-pass membrane protein</topology>
    </subcellularLocation>
</comment>
<comment type="similarity">
    <text evidence="1">Belongs to the complex I subunit 1 family.</text>
</comment>
<name>NUOH_BORBR</name>
<feature type="chain" id="PRO_0000244897" description="NADH-quinone oxidoreductase subunit H">
    <location>
        <begin position="1"/>
        <end position="357"/>
    </location>
</feature>
<feature type="transmembrane region" description="Helical" evidence="1">
    <location>
        <begin position="18"/>
        <end position="38"/>
    </location>
</feature>
<feature type="transmembrane region" description="Helical" evidence="1">
    <location>
        <begin position="92"/>
        <end position="112"/>
    </location>
</feature>
<feature type="transmembrane region" description="Helical" evidence="1">
    <location>
        <begin position="127"/>
        <end position="147"/>
    </location>
</feature>
<feature type="transmembrane region" description="Helical" evidence="1">
    <location>
        <begin position="165"/>
        <end position="185"/>
    </location>
</feature>
<feature type="transmembrane region" description="Helical" evidence="1">
    <location>
        <begin position="206"/>
        <end position="226"/>
    </location>
</feature>
<feature type="transmembrane region" description="Helical" evidence="1">
    <location>
        <begin position="268"/>
        <end position="288"/>
    </location>
</feature>
<feature type="transmembrane region" description="Helical" evidence="1">
    <location>
        <begin position="294"/>
        <end position="314"/>
    </location>
</feature>
<feature type="transmembrane region" description="Helical" evidence="1">
    <location>
        <begin position="329"/>
        <end position="349"/>
    </location>
</feature>
<organism>
    <name type="scientific">Bordetella bronchiseptica (strain ATCC BAA-588 / NCTC 13252 / RB50)</name>
    <name type="common">Alcaligenes bronchisepticus</name>
    <dbReference type="NCBI Taxonomy" id="257310"/>
    <lineage>
        <taxon>Bacteria</taxon>
        <taxon>Pseudomonadati</taxon>
        <taxon>Pseudomonadota</taxon>
        <taxon>Betaproteobacteria</taxon>
        <taxon>Burkholderiales</taxon>
        <taxon>Alcaligenaceae</taxon>
        <taxon>Bordetella</taxon>
    </lineage>
</organism>
<protein>
    <recommendedName>
        <fullName evidence="1">NADH-quinone oxidoreductase subunit H</fullName>
        <ecNumber evidence="1">7.1.1.-</ecNumber>
    </recommendedName>
    <alternativeName>
        <fullName evidence="1">NADH dehydrogenase I subunit H</fullName>
    </alternativeName>
    <alternativeName>
        <fullName evidence="1">NDH-1 subunit H</fullName>
    </alternativeName>
</protein>